<reference key="1">
    <citation type="journal article" date="2004" name="Nucleic Acids Res.">
        <title>Genome sequence of Symbiobacterium thermophilum, an uncultivable bacterium that depends on microbial commensalism.</title>
        <authorList>
            <person name="Ueda K."/>
            <person name="Yamashita A."/>
            <person name="Ishikawa J."/>
            <person name="Shimada M."/>
            <person name="Watsuji T."/>
            <person name="Morimura K."/>
            <person name="Ikeda H."/>
            <person name="Hattori M."/>
            <person name="Beppu T."/>
        </authorList>
    </citation>
    <scope>NUCLEOTIDE SEQUENCE [LARGE SCALE GENOMIC DNA]</scope>
    <source>
        <strain>DSM 24528 / JCM 14929 / IAM 14863 / T</strain>
    </source>
</reference>
<evidence type="ECO:0000255" key="1">
    <source>
        <dbReference type="HAMAP-Rule" id="MF_01024"/>
    </source>
</evidence>
<dbReference type="EC" id="1.1.1.23" evidence="1"/>
<dbReference type="EMBL" id="AP006840">
    <property type="protein sequence ID" value="BAD41822.1"/>
    <property type="molecule type" value="Genomic_DNA"/>
</dbReference>
<dbReference type="RefSeq" id="WP_011196956.1">
    <property type="nucleotide sequence ID" value="NC_006177.1"/>
</dbReference>
<dbReference type="SMR" id="Q67KH6"/>
<dbReference type="STRING" id="292459.STH2837"/>
<dbReference type="KEGG" id="sth:STH2837"/>
<dbReference type="eggNOG" id="COG0141">
    <property type="taxonomic scope" value="Bacteria"/>
</dbReference>
<dbReference type="HOGENOM" id="CLU_006732_3_3_9"/>
<dbReference type="OrthoDB" id="9805269at2"/>
<dbReference type="UniPathway" id="UPA00031">
    <property type="reaction ID" value="UER00014"/>
</dbReference>
<dbReference type="Proteomes" id="UP000000417">
    <property type="component" value="Chromosome"/>
</dbReference>
<dbReference type="GO" id="GO:0005829">
    <property type="term" value="C:cytosol"/>
    <property type="evidence" value="ECO:0007669"/>
    <property type="project" value="TreeGrafter"/>
</dbReference>
<dbReference type="GO" id="GO:0004399">
    <property type="term" value="F:histidinol dehydrogenase activity"/>
    <property type="evidence" value="ECO:0007669"/>
    <property type="project" value="UniProtKB-UniRule"/>
</dbReference>
<dbReference type="GO" id="GO:0051287">
    <property type="term" value="F:NAD binding"/>
    <property type="evidence" value="ECO:0007669"/>
    <property type="project" value="InterPro"/>
</dbReference>
<dbReference type="GO" id="GO:0008270">
    <property type="term" value="F:zinc ion binding"/>
    <property type="evidence" value="ECO:0007669"/>
    <property type="project" value="UniProtKB-UniRule"/>
</dbReference>
<dbReference type="GO" id="GO:0000105">
    <property type="term" value="P:L-histidine biosynthetic process"/>
    <property type="evidence" value="ECO:0007669"/>
    <property type="project" value="UniProtKB-UniRule"/>
</dbReference>
<dbReference type="CDD" id="cd06572">
    <property type="entry name" value="Histidinol_dh"/>
    <property type="match status" value="1"/>
</dbReference>
<dbReference type="FunFam" id="3.40.50.1980:FF:000001">
    <property type="entry name" value="Histidinol dehydrogenase"/>
    <property type="match status" value="1"/>
</dbReference>
<dbReference type="FunFam" id="3.40.50.1980:FF:000026">
    <property type="entry name" value="Histidinol dehydrogenase"/>
    <property type="match status" value="1"/>
</dbReference>
<dbReference type="Gene3D" id="1.20.5.1300">
    <property type="match status" value="1"/>
</dbReference>
<dbReference type="Gene3D" id="3.40.50.1980">
    <property type="entry name" value="Nitrogenase molybdenum iron protein domain"/>
    <property type="match status" value="2"/>
</dbReference>
<dbReference type="HAMAP" id="MF_01024">
    <property type="entry name" value="HisD"/>
    <property type="match status" value="1"/>
</dbReference>
<dbReference type="InterPro" id="IPR016161">
    <property type="entry name" value="Ald_DH/histidinol_DH"/>
</dbReference>
<dbReference type="InterPro" id="IPR001692">
    <property type="entry name" value="Histidinol_DH_CS"/>
</dbReference>
<dbReference type="InterPro" id="IPR022695">
    <property type="entry name" value="Histidinol_DH_monofunct"/>
</dbReference>
<dbReference type="InterPro" id="IPR012131">
    <property type="entry name" value="Hstdl_DH"/>
</dbReference>
<dbReference type="NCBIfam" id="TIGR00069">
    <property type="entry name" value="hisD"/>
    <property type="match status" value="1"/>
</dbReference>
<dbReference type="PANTHER" id="PTHR21256:SF2">
    <property type="entry name" value="HISTIDINE BIOSYNTHESIS TRIFUNCTIONAL PROTEIN"/>
    <property type="match status" value="1"/>
</dbReference>
<dbReference type="PANTHER" id="PTHR21256">
    <property type="entry name" value="HISTIDINOL DEHYDROGENASE HDH"/>
    <property type="match status" value="1"/>
</dbReference>
<dbReference type="Pfam" id="PF00815">
    <property type="entry name" value="Histidinol_dh"/>
    <property type="match status" value="1"/>
</dbReference>
<dbReference type="PIRSF" id="PIRSF000099">
    <property type="entry name" value="Histidinol_dh"/>
    <property type="match status" value="1"/>
</dbReference>
<dbReference type="PRINTS" id="PR00083">
    <property type="entry name" value="HOLDHDRGNASE"/>
</dbReference>
<dbReference type="SUPFAM" id="SSF53720">
    <property type="entry name" value="ALDH-like"/>
    <property type="match status" value="1"/>
</dbReference>
<dbReference type="PROSITE" id="PS00611">
    <property type="entry name" value="HISOL_DEHYDROGENASE"/>
    <property type="match status" value="1"/>
</dbReference>
<accession>Q67KH6</accession>
<proteinExistence type="inferred from homology"/>
<protein>
    <recommendedName>
        <fullName evidence="1">Histidinol dehydrogenase</fullName>
        <shortName evidence="1">HDH</shortName>
        <ecNumber evidence="1">1.1.1.23</ecNumber>
    </recommendedName>
</protein>
<sequence>MLKVWEPQAFLEFLNRRRTEFYPEIEAQVRAILERVRREGDGALYAFTRQFDGADLEATGLRVTEAEYREAEAAVSAAFRAALQVAVENIAAFHRPQVPTSWFTTRPDGTIVGQRVTPVDRAGVYVPGGSAPLFSCLLMTAIPAVVAGVPEVIVCTPPDRNGRIDPHMLVAARAAGVKDVYKVGGAQAIGAMAYGTATVPRVDKIAGPGNYYVTLAKKLVFGPVGIDMLAGPTEVMAVDDGSVDAEWLAADLLSQAEHPNGMVILVTTAGPERIAAVGAAMARHTAALPRAETIRRSVAELGAALAVDTLEEAADLVNAVGPEHLEVGVADPWAFLPLVRHAGSIFLGRWTPEAMGDYIAGPSNVIPTEGTARYASPVCVETFIKRSAVTCYSEAAFRAQAPHAVRLALTEDLLAHAASMQIRLAKPDGESPSEGREAG</sequence>
<organism>
    <name type="scientific">Symbiobacterium thermophilum (strain DSM 24528 / JCM 14929 / IAM 14863 / T)</name>
    <dbReference type="NCBI Taxonomy" id="292459"/>
    <lineage>
        <taxon>Bacteria</taxon>
        <taxon>Bacillati</taxon>
        <taxon>Bacillota</taxon>
        <taxon>Clostridia</taxon>
        <taxon>Eubacteriales</taxon>
        <taxon>Symbiobacteriaceae</taxon>
        <taxon>Symbiobacterium</taxon>
    </lineage>
</organism>
<gene>
    <name evidence="1" type="primary">hisD</name>
    <name type="ordered locus">STH2837</name>
</gene>
<feature type="chain" id="PRO_0000135861" description="Histidinol dehydrogenase">
    <location>
        <begin position="1"/>
        <end position="439"/>
    </location>
</feature>
<feature type="active site" description="Proton acceptor" evidence="1">
    <location>
        <position position="323"/>
    </location>
</feature>
<feature type="active site" description="Proton acceptor" evidence="1">
    <location>
        <position position="324"/>
    </location>
</feature>
<feature type="binding site" evidence="1">
    <location>
        <position position="125"/>
    </location>
    <ligand>
        <name>NAD(+)</name>
        <dbReference type="ChEBI" id="CHEBI:57540"/>
    </ligand>
</feature>
<feature type="binding site" evidence="1">
    <location>
        <position position="187"/>
    </location>
    <ligand>
        <name>NAD(+)</name>
        <dbReference type="ChEBI" id="CHEBI:57540"/>
    </ligand>
</feature>
<feature type="binding site" evidence="1">
    <location>
        <position position="210"/>
    </location>
    <ligand>
        <name>NAD(+)</name>
        <dbReference type="ChEBI" id="CHEBI:57540"/>
    </ligand>
</feature>
<feature type="binding site" evidence="1">
    <location>
        <position position="233"/>
    </location>
    <ligand>
        <name>substrate</name>
    </ligand>
</feature>
<feature type="binding site" evidence="1">
    <location>
        <position position="255"/>
    </location>
    <ligand>
        <name>substrate</name>
    </ligand>
</feature>
<feature type="binding site" evidence="1">
    <location>
        <position position="255"/>
    </location>
    <ligand>
        <name>Zn(2+)</name>
        <dbReference type="ChEBI" id="CHEBI:29105"/>
    </ligand>
</feature>
<feature type="binding site" evidence="1">
    <location>
        <position position="258"/>
    </location>
    <ligand>
        <name>substrate</name>
    </ligand>
</feature>
<feature type="binding site" evidence="1">
    <location>
        <position position="258"/>
    </location>
    <ligand>
        <name>Zn(2+)</name>
        <dbReference type="ChEBI" id="CHEBI:29105"/>
    </ligand>
</feature>
<feature type="binding site" evidence="1">
    <location>
        <position position="324"/>
    </location>
    <ligand>
        <name>substrate</name>
    </ligand>
</feature>
<feature type="binding site" evidence="1">
    <location>
        <position position="357"/>
    </location>
    <ligand>
        <name>substrate</name>
    </ligand>
</feature>
<feature type="binding site" evidence="1">
    <location>
        <position position="357"/>
    </location>
    <ligand>
        <name>Zn(2+)</name>
        <dbReference type="ChEBI" id="CHEBI:29105"/>
    </ligand>
</feature>
<feature type="binding site" evidence="1">
    <location>
        <position position="411"/>
    </location>
    <ligand>
        <name>substrate</name>
    </ligand>
</feature>
<feature type="binding site" evidence="1">
    <location>
        <position position="416"/>
    </location>
    <ligand>
        <name>substrate</name>
    </ligand>
</feature>
<feature type="binding site" evidence="1">
    <location>
        <position position="416"/>
    </location>
    <ligand>
        <name>Zn(2+)</name>
        <dbReference type="ChEBI" id="CHEBI:29105"/>
    </ligand>
</feature>
<comment type="function">
    <text evidence="1">Catalyzes the sequential NAD-dependent oxidations of L-histidinol to L-histidinaldehyde and then to L-histidine.</text>
</comment>
<comment type="catalytic activity">
    <reaction evidence="1">
        <text>L-histidinol + 2 NAD(+) + H2O = L-histidine + 2 NADH + 3 H(+)</text>
        <dbReference type="Rhea" id="RHEA:20641"/>
        <dbReference type="ChEBI" id="CHEBI:15377"/>
        <dbReference type="ChEBI" id="CHEBI:15378"/>
        <dbReference type="ChEBI" id="CHEBI:57540"/>
        <dbReference type="ChEBI" id="CHEBI:57595"/>
        <dbReference type="ChEBI" id="CHEBI:57699"/>
        <dbReference type="ChEBI" id="CHEBI:57945"/>
        <dbReference type="EC" id="1.1.1.23"/>
    </reaction>
</comment>
<comment type="cofactor">
    <cofactor evidence="1">
        <name>Zn(2+)</name>
        <dbReference type="ChEBI" id="CHEBI:29105"/>
    </cofactor>
    <text evidence="1">Binds 1 zinc ion per subunit.</text>
</comment>
<comment type="pathway">
    <text evidence="1">Amino-acid biosynthesis; L-histidine biosynthesis; L-histidine from 5-phospho-alpha-D-ribose 1-diphosphate: step 9/9.</text>
</comment>
<comment type="similarity">
    <text evidence="1">Belongs to the histidinol dehydrogenase family.</text>
</comment>
<keyword id="KW-0028">Amino-acid biosynthesis</keyword>
<keyword id="KW-0368">Histidine biosynthesis</keyword>
<keyword id="KW-0479">Metal-binding</keyword>
<keyword id="KW-0520">NAD</keyword>
<keyword id="KW-0560">Oxidoreductase</keyword>
<keyword id="KW-1185">Reference proteome</keyword>
<keyword id="KW-0862">Zinc</keyword>
<name>HISX_SYMTH</name>